<accession>Q54DB0</accession>
<gene>
    <name type="ORF">DDB_G0292518</name>
</gene>
<feature type="chain" id="PRO_0000317360" description="UPF0512 protein V">
    <location>
        <begin position="1"/>
        <end position="86"/>
    </location>
</feature>
<evidence type="ECO:0000305" key="1"/>
<sequence length="86" mass="8693">MTLFNSISSISNSTGLSKQSLIVNVDGNTSSSGGNSTSWLGGFDGCGGCGGFGSYGGCRGFGGCGGSNLNIINVDIDIGRRRRRCC</sequence>
<dbReference type="EMBL" id="AAFI02000190">
    <property type="protein sequence ID" value="EAL61238.1"/>
    <property type="molecule type" value="Genomic_DNA"/>
</dbReference>
<dbReference type="RefSeq" id="XP_629586.1">
    <property type="nucleotide sequence ID" value="XM_629584.1"/>
</dbReference>
<dbReference type="PaxDb" id="44689-DDB0267058"/>
<dbReference type="EnsemblProtists" id="EAL61238">
    <property type="protein sequence ID" value="EAL61238"/>
    <property type="gene ID" value="DDB_G0292518"/>
</dbReference>
<dbReference type="GeneID" id="8628646"/>
<dbReference type="KEGG" id="ddi:DDB_G0292518"/>
<dbReference type="dictyBase" id="DDB_G0292518"/>
<dbReference type="HOGENOM" id="CLU_194865_0_0_1"/>
<dbReference type="InParanoid" id="Q54DB0"/>
<dbReference type="PRO" id="PR:Q54DB0"/>
<dbReference type="Proteomes" id="UP000002195">
    <property type="component" value="Chromosome 6"/>
</dbReference>
<organism>
    <name type="scientific">Dictyostelium discoideum</name>
    <name type="common">Social amoeba</name>
    <dbReference type="NCBI Taxonomy" id="44689"/>
    <lineage>
        <taxon>Eukaryota</taxon>
        <taxon>Amoebozoa</taxon>
        <taxon>Evosea</taxon>
        <taxon>Eumycetozoa</taxon>
        <taxon>Dictyostelia</taxon>
        <taxon>Dictyosteliales</taxon>
        <taxon>Dictyosteliaceae</taxon>
        <taxon>Dictyostelium</taxon>
    </lineage>
</organism>
<keyword id="KW-1185">Reference proteome</keyword>
<reference key="1">
    <citation type="journal article" date="2005" name="Nature">
        <title>The genome of the social amoeba Dictyostelium discoideum.</title>
        <authorList>
            <person name="Eichinger L."/>
            <person name="Pachebat J.A."/>
            <person name="Gloeckner G."/>
            <person name="Rajandream M.A."/>
            <person name="Sucgang R."/>
            <person name="Berriman M."/>
            <person name="Song J."/>
            <person name="Olsen R."/>
            <person name="Szafranski K."/>
            <person name="Xu Q."/>
            <person name="Tunggal B."/>
            <person name="Kummerfeld S."/>
            <person name="Madera M."/>
            <person name="Konfortov B.A."/>
            <person name="Rivero F."/>
            <person name="Bankier A.T."/>
            <person name="Lehmann R."/>
            <person name="Hamlin N."/>
            <person name="Davies R."/>
            <person name="Gaudet P."/>
            <person name="Fey P."/>
            <person name="Pilcher K."/>
            <person name="Chen G."/>
            <person name="Saunders D."/>
            <person name="Sodergren E.J."/>
            <person name="Davis P."/>
            <person name="Kerhornou A."/>
            <person name="Nie X."/>
            <person name="Hall N."/>
            <person name="Anjard C."/>
            <person name="Hemphill L."/>
            <person name="Bason N."/>
            <person name="Farbrother P."/>
            <person name="Desany B."/>
            <person name="Just E."/>
            <person name="Morio T."/>
            <person name="Rost R."/>
            <person name="Churcher C.M."/>
            <person name="Cooper J."/>
            <person name="Haydock S."/>
            <person name="van Driessche N."/>
            <person name="Cronin A."/>
            <person name="Goodhead I."/>
            <person name="Muzny D.M."/>
            <person name="Mourier T."/>
            <person name="Pain A."/>
            <person name="Lu M."/>
            <person name="Harper D."/>
            <person name="Lindsay R."/>
            <person name="Hauser H."/>
            <person name="James K.D."/>
            <person name="Quiles M."/>
            <person name="Madan Babu M."/>
            <person name="Saito T."/>
            <person name="Buchrieser C."/>
            <person name="Wardroper A."/>
            <person name="Felder M."/>
            <person name="Thangavelu M."/>
            <person name="Johnson D."/>
            <person name="Knights A."/>
            <person name="Loulseged H."/>
            <person name="Mungall K.L."/>
            <person name="Oliver K."/>
            <person name="Price C."/>
            <person name="Quail M.A."/>
            <person name="Urushihara H."/>
            <person name="Hernandez J."/>
            <person name="Rabbinowitsch E."/>
            <person name="Steffen D."/>
            <person name="Sanders M."/>
            <person name="Ma J."/>
            <person name="Kohara Y."/>
            <person name="Sharp S."/>
            <person name="Simmonds M.N."/>
            <person name="Spiegler S."/>
            <person name="Tivey A."/>
            <person name="Sugano S."/>
            <person name="White B."/>
            <person name="Walker D."/>
            <person name="Woodward J.R."/>
            <person name="Winckler T."/>
            <person name="Tanaka Y."/>
            <person name="Shaulsky G."/>
            <person name="Schleicher M."/>
            <person name="Weinstock G.M."/>
            <person name="Rosenthal A."/>
            <person name="Cox E.C."/>
            <person name="Chisholm R.L."/>
            <person name="Gibbs R.A."/>
            <person name="Loomis W.F."/>
            <person name="Platzer M."/>
            <person name="Kay R.R."/>
            <person name="Williams J.G."/>
            <person name="Dear P.H."/>
            <person name="Noegel A.A."/>
            <person name="Barrell B.G."/>
            <person name="Kuspa A."/>
        </authorList>
    </citation>
    <scope>NUCLEOTIDE SEQUENCE [LARGE SCALE GENOMIC DNA]</scope>
    <source>
        <strain>AX4</strain>
    </source>
</reference>
<name>U512V_DICDI</name>
<proteinExistence type="inferred from homology"/>
<comment type="similarity">
    <text evidence="1">Belongs to the UPF0512 family.</text>
</comment>
<protein>
    <recommendedName>
        <fullName>UPF0512 protein V</fullName>
    </recommendedName>
</protein>